<protein>
    <recommendedName>
        <fullName evidence="1">Small ribosomal subunit protein uS3</fullName>
    </recommendedName>
    <alternativeName>
        <fullName evidence="3">30S ribosomal protein S3</fullName>
    </alternativeName>
</protein>
<gene>
    <name evidence="1" type="primary">rpsC</name>
    <name type="ordered locus">XfasM23_0439</name>
</gene>
<keyword id="KW-0687">Ribonucleoprotein</keyword>
<keyword id="KW-0689">Ribosomal protein</keyword>
<keyword id="KW-0694">RNA-binding</keyword>
<keyword id="KW-0699">rRNA-binding</keyword>
<organism>
    <name type="scientific">Xylella fastidiosa (strain M23)</name>
    <dbReference type="NCBI Taxonomy" id="405441"/>
    <lineage>
        <taxon>Bacteria</taxon>
        <taxon>Pseudomonadati</taxon>
        <taxon>Pseudomonadota</taxon>
        <taxon>Gammaproteobacteria</taxon>
        <taxon>Lysobacterales</taxon>
        <taxon>Lysobacteraceae</taxon>
        <taxon>Xylella</taxon>
    </lineage>
</organism>
<feature type="chain" id="PRO_1000141035" description="Small ribosomal subunit protein uS3">
    <location>
        <begin position="1"/>
        <end position="239"/>
    </location>
</feature>
<feature type="domain" description="KH type-2" evidence="1">
    <location>
        <begin position="39"/>
        <end position="107"/>
    </location>
</feature>
<feature type="region of interest" description="Disordered" evidence="2">
    <location>
        <begin position="214"/>
        <end position="239"/>
    </location>
</feature>
<feature type="compositionally biased region" description="Basic and acidic residues" evidence="2">
    <location>
        <begin position="216"/>
        <end position="239"/>
    </location>
</feature>
<reference key="1">
    <citation type="journal article" date="2010" name="J. Bacteriol.">
        <title>Whole genome sequences of two Xylella fastidiosa strains (M12 and M23) causing almond leaf scorch disease in California.</title>
        <authorList>
            <person name="Chen J."/>
            <person name="Xie G."/>
            <person name="Han S."/>
            <person name="Chertkov O."/>
            <person name="Sims D."/>
            <person name="Civerolo E.L."/>
        </authorList>
    </citation>
    <scope>NUCLEOTIDE SEQUENCE [LARGE SCALE GENOMIC DNA]</scope>
    <source>
        <strain>M23</strain>
    </source>
</reference>
<accession>B2I8H5</accession>
<name>RS3_XYLF2</name>
<sequence length="239" mass="26809">MGHKVHPIGIRLGISADWNSKWYANKAEFARYLAADLKVRQVLRKKMSQAGISKILIERPSNTACVSMHVARPGVVIGKRGEDIEMLRKQVSDIMGVPVHINVIEVRKPELDAQLVAESVAQQLERRIMFRRAMKRSVSNAIRLGALGIKISVAGRLNGAEIARSEWYREGRVPLQTLRADIGYGFSEAYTNYGVTGVKVLMYHGDIFSFSSVSQEKQDDGSRGDRNADRSSRRSREVR</sequence>
<dbReference type="EMBL" id="CP001011">
    <property type="protein sequence ID" value="ACB91886.1"/>
    <property type="molecule type" value="Genomic_DNA"/>
</dbReference>
<dbReference type="RefSeq" id="WP_004090104.1">
    <property type="nucleotide sequence ID" value="NC_010577.1"/>
</dbReference>
<dbReference type="SMR" id="B2I8H5"/>
<dbReference type="GeneID" id="93904145"/>
<dbReference type="KEGG" id="xfn:XfasM23_0439"/>
<dbReference type="HOGENOM" id="CLU_058591_0_2_6"/>
<dbReference type="Proteomes" id="UP000001698">
    <property type="component" value="Chromosome"/>
</dbReference>
<dbReference type="GO" id="GO:0022627">
    <property type="term" value="C:cytosolic small ribosomal subunit"/>
    <property type="evidence" value="ECO:0007669"/>
    <property type="project" value="TreeGrafter"/>
</dbReference>
<dbReference type="GO" id="GO:0003729">
    <property type="term" value="F:mRNA binding"/>
    <property type="evidence" value="ECO:0007669"/>
    <property type="project" value="UniProtKB-UniRule"/>
</dbReference>
<dbReference type="GO" id="GO:0019843">
    <property type="term" value="F:rRNA binding"/>
    <property type="evidence" value="ECO:0007669"/>
    <property type="project" value="UniProtKB-UniRule"/>
</dbReference>
<dbReference type="GO" id="GO:0003735">
    <property type="term" value="F:structural constituent of ribosome"/>
    <property type="evidence" value="ECO:0007669"/>
    <property type="project" value="InterPro"/>
</dbReference>
<dbReference type="GO" id="GO:0006412">
    <property type="term" value="P:translation"/>
    <property type="evidence" value="ECO:0007669"/>
    <property type="project" value="UniProtKB-UniRule"/>
</dbReference>
<dbReference type="CDD" id="cd02412">
    <property type="entry name" value="KH-II_30S_S3"/>
    <property type="match status" value="1"/>
</dbReference>
<dbReference type="FunFam" id="3.30.300.20:FF:000001">
    <property type="entry name" value="30S ribosomal protein S3"/>
    <property type="match status" value="1"/>
</dbReference>
<dbReference type="Gene3D" id="3.30.300.20">
    <property type="match status" value="1"/>
</dbReference>
<dbReference type="Gene3D" id="3.30.1140.32">
    <property type="entry name" value="Ribosomal protein S3, C-terminal domain"/>
    <property type="match status" value="1"/>
</dbReference>
<dbReference type="HAMAP" id="MF_01309_B">
    <property type="entry name" value="Ribosomal_uS3_B"/>
    <property type="match status" value="1"/>
</dbReference>
<dbReference type="InterPro" id="IPR004087">
    <property type="entry name" value="KH_dom"/>
</dbReference>
<dbReference type="InterPro" id="IPR015946">
    <property type="entry name" value="KH_dom-like_a/b"/>
</dbReference>
<dbReference type="InterPro" id="IPR004044">
    <property type="entry name" value="KH_dom_type_2"/>
</dbReference>
<dbReference type="InterPro" id="IPR009019">
    <property type="entry name" value="KH_sf_prok-type"/>
</dbReference>
<dbReference type="InterPro" id="IPR036419">
    <property type="entry name" value="Ribosomal_S3_C_sf"/>
</dbReference>
<dbReference type="InterPro" id="IPR005704">
    <property type="entry name" value="Ribosomal_uS3_bac-typ"/>
</dbReference>
<dbReference type="InterPro" id="IPR001351">
    <property type="entry name" value="Ribosomal_uS3_C"/>
</dbReference>
<dbReference type="NCBIfam" id="TIGR01009">
    <property type="entry name" value="rpsC_bact"/>
    <property type="match status" value="1"/>
</dbReference>
<dbReference type="PANTHER" id="PTHR11760">
    <property type="entry name" value="30S/40S RIBOSOMAL PROTEIN S3"/>
    <property type="match status" value="1"/>
</dbReference>
<dbReference type="PANTHER" id="PTHR11760:SF19">
    <property type="entry name" value="SMALL RIBOSOMAL SUBUNIT PROTEIN US3C"/>
    <property type="match status" value="1"/>
</dbReference>
<dbReference type="Pfam" id="PF07650">
    <property type="entry name" value="KH_2"/>
    <property type="match status" value="1"/>
</dbReference>
<dbReference type="Pfam" id="PF00189">
    <property type="entry name" value="Ribosomal_S3_C"/>
    <property type="match status" value="1"/>
</dbReference>
<dbReference type="SMART" id="SM00322">
    <property type="entry name" value="KH"/>
    <property type="match status" value="1"/>
</dbReference>
<dbReference type="SUPFAM" id="SSF54814">
    <property type="entry name" value="Prokaryotic type KH domain (KH-domain type II)"/>
    <property type="match status" value="1"/>
</dbReference>
<dbReference type="SUPFAM" id="SSF54821">
    <property type="entry name" value="Ribosomal protein S3 C-terminal domain"/>
    <property type="match status" value="1"/>
</dbReference>
<dbReference type="PROSITE" id="PS50823">
    <property type="entry name" value="KH_TYPE_2"/>
    <property type="match status" value="1"/>
</dbReference>
<evidence type="ECO:0000255" key="1">
    <source>
        <dbReference type="HAMAP-Rule" id="MF_01309"/>
    </source>
</evidence>
<evidence type="ECO:0000256" key="2">
    <source>
        <dbReference type="SAM" id="MobiDB-lite"/>
    </source>
</evidence>
<evidence type="ECO:0000305" key="3"/>
<proteinExistence type="inferred from homology"/>
<comment type="function">
    <text evidence="1">Binds the lower part of the 30S subunit head. Binds mRNA in the 70S ribosome, positioning it for translation.</text>
</comment>
<comment type="subunit">
    <text evidence="1">Part of the 30S ribosomal subunit. Forms a tight complex with proteins S10 and S14.</text>
</comment>
<comment type="similarity">
    <text evidence="1">Belongs to the universal ribosomal protein uS3 family.</text>
</comment>